<keyword id="KW-0002">3D-structure</keyword>
<keyword id="KW-0007">Acetylation</keyword>
<keyword id="KW-0025">Alternative splicing</keyword>
<keyword id="KW-0963">Cytoplasm</keyword>
<keyword id="KW-0903">Direct protein sequencing</keyword>
<keyword id="KW-0378">Hydrolase</keyword>
<keyword id="KW-0904">Protein phosphatase</keyword>
<keyword id="KW-1267">Proteomics identification</keyword>
<keyword id="KW-1185">Reference proteome</keyword>
<reference key="1">
    <citation type="journal article" date="2002" name="Eur. J. Biochem.">
        <title>Identification and characterization of a mammalian 14-kDa phosphohistidine phosphatase.</title>
        <authorList>
            <person name="Ek P."/>
            <person name="Pettersson G."/>
            <person name="Ek B."/>
            <person name="Gong F."/>
            <person name="Li J.-P."/>
            <person name="Zetterqvist O."/>
        </authorList>
    </citation>
    <scope>NUCLEOTIDE SEQUENCE [MRNA] (ISOFORM 1)</scope>
    <scope>PROTEIN SEQUENCE OF 2-21; 49-59; 88-108 AND 111-125</scope>
    <scope>TISSUE SPECIFICITY</scope>
    <scope>SUBUNIT</scope>
    <scope>CHARACTERIZATION</scope>
    <source>
        <tissue>Embryonic kidney</tissue>
    </source>
</reference>
<reference key="2">
    <citation type="journal article" date="2000" name="Proc. Natl. Acad. Sci. U.S.A.">
        <title>Gene expression profiling in the human hypothalamus-pituitary-adrenal axis and full-length cDNA cloning.</title>
        <authorList>
            <person name="Hu R.-M."/>
            <person name="Han Z.-G."/>
            <person name="Song H.-D."/>
            <person name="Peng Y.-D."/>
            <person name="Huang Q.-H."/>
            <person name="Ren S.-X."/>
            <person name="Gu Y.-J."/>
            <person name="Huang C.-H."/>
            <person name="Li Y.-B."/>
            <person name="Jiang C.-L."/>
            <person name="Fu G."/>
            <person name="Zhang Q.-H."/>
            <person name="Gu B.-W."/>
            <person name="Dai M."/>
            <person name="Mao Y.-F."/>
            <person name="Gao G.-F."/>
            <person name="Rong R."/>
            <person name="Ye M."/>
            <person name="Zhou J."/>
            <person name="Xu S.-H."/>
            <person name="Gu J."/>
            <person name="Shi J.-X."/>
            <person name="Jin W.-R."/>
            <person name="Zhang C.-K."/>
            <person name="Wu T.-M."/>
            <person name="Huang G.-Y."/>
            <person name="Chen Z."/>
            <person name="Chen M.-D."/>
            <person name="Chen J.-L."/>
        </authorList>
    </citation>
    <scope>NUCLEOTIDE SEQUENCE [LARGE SCALE MRNA] (ISOFORM 1)</scope>
    <source>
        <tissue>Adrenal gland</tissue>
    </source>
</reference>
<reference key="3">
    <citation type="journal article" date="2001" name="Biochim. Biophys. Acta">
        <title>Identification of the human crooked neck gene by comparative gene identification.</title>
        <authorList>
            <person name="Lai C.-H."/>
            <person name="Chiu J.-Y."/>
            <person name="Lin W.-C."/>
        </authorList>
    </citation>
    <scope>NUCLEOTIDE SEQUENCE [MRNA] (ISOFORM 1)</scope>
</reference>
<reference key="4">
    <citation type="journal article" date="2001" name="Genome Res.">
        <title>Towards a catalog of human genes and proteins: sequencing and analysis of 500 novel complete protein coding human cDNAs.</title>
        <authorList>
            <person name="Wiemann S."/>
            <person name="Weil B."/>
            <person name="Wellenreuther R."/>
            <person name="Gassenhuber J."/>
            <person name="Glassl S."/>
            <person name="Ansorge W."/>
            <person name="Boecher M."/>
            <person name="Bloecker H."/>
            <person name="Bauersachs S."/>
            <person name="Blum H."/>
            <person name="Lauber J."/>
            <person name="Duesterhoeft A."/>
            <person name="Beyer A."/>
            <person name="Koehrer K."/>
            <person name="Strack N."/>
            <person name="Mewes H.-W."/>
            <person name="Ottenwaelder B."/>
            <person name="Obermaier B."/>
            <person name="Tampe J."/>
            <person name="Heubner D."/>
            <person name="Wambutt R."/>
            <person name="Korn B."/>
            <person name="Klein M."/>
            <person name="Poustka A."/>
        </authorList>
    </citation>
    <scope>NUCLEOTIDE SEQUENCE [LARGE SCALE MRNA] (ISOFORM 1)</scope>
    <source>
        <tissue>Fetal brain</tissue>
    </source>
</reference>
<reference key="5">
    <citation type="journal article" date="2004" name="Nature">
        <title>DNA sequence and analysis of human chromosome 9.</title>
        <authorList>
            <person name="Humphray S.J."/>
            <person name="Oliver K."/>
            <person name="Hunt A.R."/>
            <person name="Plumb R.W."/>
            <person name="Loveland J.E."/>
            <person name="Howe K.L."/>
            <person name="Andrews T.D."/>
            <person name="Searle S."/>
            <person name="Hunt S.E."/>
            <person name="Scott C.E."/>
            <person name="Jones M.C."/>
            <person name="Ainscough R."/>
            <person name="Almeida J.P."/>
            <person name="Ambrose K.D."/>
            <person name="Ashwell R.I.S."/>
            <person name="Babbage A.K."/>
            <person name="Babbage S."/>
            <person name="Bagguley C.L."/>
            <person name="Bailey J."/>
            <person name="Banerjee R."/>
            <person name="Barker D.J."/>
            <person name="Barlow K.F."/>
            <person name="Bates K."/>
            <person name="Beasley H."/>
            <person name="Beasley O."/>
            <person name="Bird C.P."/>
            <person name="Bray-Allen S."/>
            <person name="Brown A.J."/>
            <person name="Brown J.Y."/>
            <person name="Burford D."/>
            <person name="Burrill W."/>
            <person name="Burton J."/>
            <person name="Carder C."/>
            <person name="Carter N.P."/>
            <person name="Chapman J.C."/>
            <person name="Chen Y."/>
            <person name="Clarke G."/>
            <person name="Clark S.Y."/>
            <person name="Clee C.M."/>
            <person name="Clegg S."/>
            <person name="Collier R.E."/>
            <person name="Corby N."/>
            <person name="Crosier M."/>
            <person name="Cummings A.T."/>
            <person name="Davies J."/>
            <person name="Dhami P."/>
            <person name="Dunn M."/>
            <person name="Dutta I."/>
            <person name="Dyer L.W."/>
            <person name="Earthrowl M.E."/>
            <person name="Faulkner L."/>
            <person name="Fleming C.J."/>
            <person name="Frankish A."/>
            <person name="Frankland J.A."/>
            <person name="French L."/>
            <person name="Fricker D.G."/>
            <person name="Garner P."/>
            <person name="Garnett J."/>
            <person name="Ghori J."/>
            <person name="Gilbert J.G.R."/>
            <person name="Glison C."/>
            <person name="Grafham D.V."/>
            <person name="Gribble S."/>
            <person name="Griffiths C."/>
            <person name="Griffiths-Jones S."/>
            <person name="Grocock R."/>
            <person name="Guy J."/>
            <person name="Hall R.E."/>
            <person name="Hammond S."/>
            <person name="Harley J.L."/>
            <person name="Harrison E.S.I."/>
            <person name="Hart E.A."/>
            <person name="Heath P.D."/>
            <person name="Henderson C.D."/>
            <person name="Hopkins B.L."/>
            <person name="Howard P.J."/>
            <person name="Howden P.J."/>
            <person name="Huckle E."/>
            <person name="Johnson C."/>
            <person name="Johnson D."/>
            <person name="Joy A.A."/>
            <person name="Kay M."/>
            <person name="Keenan S."/>
            <person name="Kershaw J.K."/>
            <person name="Kimberley A.M."/>
            <person name="King A."/>
            <person name="Knights A."/>
            <person name="Laird G.K."/>
            <person name="Langford C."/>
            <person name="Lawlor S."/>
            <person name="Leongamornlert D.A."/>
            <person name="Leversha M."/>
            <person name="Lloyd C."/>
            <person name="Lloyd D.M."/>
            <person name="Lovell J."/>
            <person name="Martin S."/>
            <person name="Mashreghi-Mohammadi M."/>
            <person name="Matthews L."/>
            <person name="McLaren S."/>
            <person name="McLay K.E."/>
            <person name="McMurray A."/>
            <person name="Milne S."/>
            <person name="Nickerson T."/>
            <person name="Nisbett J."/>
            <person name="Nordsiek G."/>
            <person name="Pearce A.V."/>
            <person name="Peck A.I."/>
            <person name="Porter K.M."/>
            <person name="Pandian R."/>
            <person name="Pelan S."/>
            <person name="Phillimore B."/>
            <person name="Povey S."/>
            <person name="Ramsey Y."/>
            <person name="Rand V."/>
            <person name="Scharfe M."/>
            <person name="Sehra H.K."/>
            <person name="Shownkeen R."/>
            <person name="Sims S.K."/>
            <person name="Skuce C.D."/>
            <person name="Smith M."/>
            <person name="Steward C.A."/>
            <person name="Swarbreck D."/>
            <person name="Sycamore N."/>
            <person name="Tester J."/>
            <person name="Thorpe A."/>
            <person name="Tracey A."/>
            <person name="Tromans A."/>
            <person name="Thomas D.W."/>
            <person name="Wall M."/>
            <person name="Wallis J.M."/>
            <person name="West A.P."/>
            <person name="Whitehead S.L."/>
            <person name="Willey D.L."/>
            <person name="Williams S.A."/>
            <person name="Wilming L."/>
            <person name="Wray P.W."/>
            <person name="Young L."/>
            <person name="Ashurst J.L."/>
            <person name="Coulson A."/>
            <person name="Blocker H."/>
            <person name="Durbin R.M."/>
            <person name="Sulston J.E."/>
            <person name="Hubbard T."/>
            <person name="Jackson M.J."/>
            <person name="Bentley D.R."/>
            <person name="Beck S."/>
            <person name="Rogers J."/>
            <person name="Dunham I."/>
        </authorList>
    </citation>
    <scope>NUCLEOTIDE SEQUENCE [LARGE SCALE GENOMIC DNA]</scope>
</reference>
<reference key="6">
    <citation type="submission" date="2005-07" db="EMBL/GenBank/DDBJ databases">
        <authorList>
            <person name="Mural R.J."/>
            <person name="Istrail S."/>
            <person name="Sutton G.G."/>
            <person name="Florea L."/>
            <person name="Halpern A.L."/>
            <person name="Mobarry C.M."/>
            <person name="Lippert R."/>
            <person name="Walenz B."/>
            <person name="Shatkay H."/>
            <person name="Dew I."/>
            <person name="Miller J.R."/>
            <person name="Flanigan M.J."/>
            <person name="Edwards N.J."/>
            <person name="Bolanos R."/>
            <person name="Fasulo D."/>
            <person name="Halldorsson B.V."/>
            <person name="Hannenhalli S."/>
            <person name="Turner R."/>
            <person name="Yooseph S."/>
            <person name="Lu F."/>
            <person name="Nusskern D.R."/>
            <person name="Shue B.C."/>
            <person name="Zheng X.H."/>
            <person name="Zhong F."/>
            <person name="Delcher A.L."/>
            <person name="Huson D.H."/>
            <person name="Kravitz S.A."/>
            <person name="Mouchard L."/>
            <person name="Reinert K."/>
            <person name="Remington K.A."/>
            <person name="Clark A.G."/>
            <person name="Waterman M.S."/>
            <person name="Eichler E.E."/>
            <person name="Adams M.D."/>
            <person name="Hunkapiller M.W."/>
            <person name="Myers E.W."/>
            <person name="Venter J.C."/>
        </authorList>
    </citation>
    <scope>NUCLEOTIDE SEQUENCE [LARGE SCALE GENOMIC DNA]</scope>
</reference>
<reference key="7">
    <citation type="journal article" date="2004" name="Genome Res.">
        <title>The status, quality, and expansion of the NIH full-length cDNA project: the Mammalian Gene Collection (MGC).</title>
        <authorList>
            <consortium name="The MGC Project Team"/>
        </authorList>
    </citation>
    <scope>NUCLEOTIDE SEQUENCE [LARGE SCALE MRNA] (ISOFORMS 1 AND 2)</scope>
    <source>
        <tissue>Brain</tissue>
        <tissue>Lung</tissue>
    </source>
</reference>
<reference key="8">
    <citation type="journal article" date="2005" name="Biochem. Biophys. Res. Commun.">
        <title>Mutational study of human phosphohistidine phosphatase: effect on enzymatic activity.</title>
        <authorList>
            <person name="Ma R."/>
            <person name="Kanders E."/>
            <person name="Sundh U.B."/>
            <person name="Geng M."/>
            <person name="Ek P."/>
            <person name="Zetterqvist O."/>
            <person name="Li J.-P."/>
        </authorList>
    </citation>
    <scope>MUTAGENESIS OF ARG-45; HIS-53; ARG-78 AND HIS-102</scope>
</reference>
<reference key="9">
    <citation type="journal article" date="2009" name="Anal. Chem.">
        <title>Lys-N and trypsin cover complementary parts of the phosphoproteome in a refined SCX-based approach.</title>
        <authorList>
            <person name="Gauci S."/>
            <person name="Helbig A.O."/>
            <person name="Slijper M."/>
            <person name="Krijgsveld J."/>
            <person name="Heck A.J."/>
            <person name="Mohammed S."/>
        </authorList>
    </citation>
    <scope>ACETYLATION [LARGE SCALE ANALYSIS] AT ALA-2</scope>
    <scope>CLEAVAGE OF INITIATOR METHIONINE [LARGE SCALE ANALYSIS]</scope>
    <scope>IDENTIFICATION BY MASS SPECTROMETRY [LARGE SCALE ANALYSIS]</scope>
</reference>
<reference key="10">
    <citation type="journal article" date="2010" name="Biochim. Biophys. Acta">
        <title>Chemical phosphorylation of histidine-containing peptides based on the sequence of histone H4 and their dephosphorylation by protein histidine phosphatase.</title>
        <authorList>
            <person name="Attwood P.V."/>
            <person name="Ludwig K."/>
            <person name="Bergander K."/>
            <person name="Besant P.G."/>
            <person name="Adina-Zada A."/>
            <person name="Krieglstein J."/>
            <person name="Klumpp S."/>
        </authorList>
    </citation>
    <scope>FUNCTION</scope>
    <scope>CATALYTIC ACTIVITY</scope>
    <scope>ENZYME KINETICS</scope>
</reference>
<reference key="11">
    <citation type="journal article" date="2011" name="BMC Syst. Biol.">
        <title>Initial characterization of the human central proteome.</title>
        <authorList>
            <person name="Burkard T.R."/>
            <person name="Planyavsky M."/>
            <person name="Kaupe I."/>
            <person name="Breitwieser F.P."/>
            <person name="Buerckstuemmer T."/>
            <person name="Bennett K.L."/>
            <person name="Superti-Furga G."/>
            <person name="Colinge J."/>
        </authorList>
    </citation>
    <scope>IDENTIFICATION BY MASS SPECTROMETRY [LARGE SCALE ANALYSIS]</scope>
</reference>
<reference key="12">
    <citation type="journal article" date="2012" name="Mol. Cell. Proteomics">
        <title>Comparative large-scale characterisation of plant vs. mammal proteins reveals similar and idiosyncratic N-alpha acetylation features.</title>
        <authorList>
            <person name="Bienvenut W.V."/>
            <person name="Sumpton D."/>
            <person name="Martinez A."/>
            <person name="Lilla S."/>
            <person name="Espagne C."/>
            <person name="Meinnel T."/>
            <person name="Giglione C."/>
        </authorList>
    </citation>
    <scope>ACETYLATION [LARGE SCALE ANALYSIS] AT ALA-2</scope>
    <scope>CLEAVAGE OF INITIATOR METHIONINE [LARGE SCALE ANALYSIS]</scope>
    <scope>IDENTIFICATION BY MASS SPECTROMETRY [LARGE SCALE ANALYSIS]</scope>
</reference>
<reference key="13">
    <citation type="journal article" date="2012" name="Proc. Natl. Acad. Sci. U.S.A.">
        <title>N-terminal acetylome analyses and functional insights of the N-terminal acetyltransferase NatB.</title>
        <authorList>
            <person name="Van Damme P."/>
            <person name="Lasa M."/>
            <person name="Polevoda B."/>
            <person name="Gazquez C."/>
            <person name="Elosegui-Artola A."/>
            <person name="Kim D.S."/>
            <person name="De Juan-Pardo E."/>
            <person name="Demeyer K."/>
            <person name="Hole K."/>
            <person name="Larrea E."/>
            <person name="Timmerman E."/>
            <person name="Prieto J."/>
            <person name="Arnesen T."/>
            <person name="Sherman F."/>
            <person name="Gevaert K."/>
            <person name="Aldabe R."/>
        </authorList>
    </citation>
    <scope>ACETYLATION [LARGE SCALE ANALYSIS] AT ALA-2</scope>
    <scope>CLEAVAGE OF INITIATOR METHIONINE [LARGE SCALE ANALYSIS]</scope>
    <scope>IDENTIFICATION BY MASS SPECTROMETRY [LARGE SCALE ANALYSIS]</scope>
</reference>
<reference key="14">
    <citation type="journal article" date="2015" name="Ups. J. Med. Sci.">
        <title>Phosphohistidine phosphatase 1 (PHPT1) also dephosphorylates phospholysine of chemically phosphorylated histone H1 and polylysine.</title>
        <authorList>
            <person name="Ek P."/>
            <person name="Ek B."/>
            <person name="Zetterqvist O."/>
        </authorList>
    </citation>
    <scope>FUNCTION</scope>
    <scope>CATALYTIC ACTIVITY</scope>
</reference>
<reference key="15">
    <citation type="journal article" date="2006" name="J. Biol. Chem.">
        <title>First structure of a eukaryotic phosphohistidine phosphatase.</title>
        <authorList>
            <person name="Busam R.D."/>
            <person name="Thorsell A.-G."/>
            <person name="Flores A."/>
            <person name="Hammarstroem M."/>
            <person name="Persson C."/>
            <person name="Hallberg B.M."/>
        </authorList>
    </citation>
    <scope>X-RAY CRYSTALLOGRAPHY (1.9 ANGSTROMS) OF 5-125</scope>
</reference>
<reference key="16">
    <citation type="journal article" date="2009" name="Biochem. J.">
        <title>Solution structure and catalytic mechanism of human protein histidine phosphatase 1.</title>
        <authorList>
            <person name="Gong W."/>
            <person name="Li Y."/>
            <person name="Cui G."/>
            <person name="Hu J."/>
            <person name="Fang H."/>
            <person name="Jin C."/>
            <person name="Xia B."/>
        </authorList>
    </citation>
    <scope>STRUCTURE BY NMR IN COMPLEXES WITH PHOSPHATE</scope>
    <scope>ACTIVE SITE</scope>
    <scope>ENZYME ACTIVITY</scope>
    <scope>MUTAGENESIS OF LYS-21; ARG-45; HIS-53; ARG-78 AND HIS-102</scope>
</reference>
<reference key="17">
    <citation type="submission" date="2007-01" db="PDB data bank">
        <title>Crystal structure of human phosphohistidine phosphatase. Northeast structural genomics consortium target HR1409.</title>
        <authorList>
            <consortium name="Northeast structural genomics consortium (NESG)"/>
        </authorList>
    </citation>
    <scope>X-RAY CRYSTALLOGRAPHY (2.7 ANGSTROMS)</scope>
</reference>
<gene>
    <name type="primary">PHPT1</name>
    <name type="synonym">PHP14</name>
    <name type="ORF">CGI-202</name>
    <name type="ORF">HSPC141</name>
</gene>
<proteinExistence type="evidence at protein level"/>
<evidence type="ECO:0000250" key="1"/>
<evidence type="ECO:0000269" key="2">
    <source>
    </source>
</evidence>
<evidence type="ECO:0000269" key="3">
    <source>
    </source>
</evidence>
<evidence type="ECO:0000269" key="4">
    <source>
    </source>
</evidence>
<evidence type="ECO:0000269" key="5">
    <source>
    </source>
</evidence>
<evidence type="ECO:0000269" key="6">
    <source>
    </source>
</evidence>
<evidence type="ECO:0000303" key="7">
    <source>
    </source>
</evidence>
<evidence type="ECO:0000303" key="8">
    <source>
    </source>
</evidence>
<evidence type="ECO:0000303" key="9">
    <source>
    </source>
</evidence>
<evidence type="ECO:0000303" key="10">
    <source>
    </source>
</evidence>
<evidence type="ECO:0000305" key="11"/>
<evidence type="ECO:0000305" key="12">
    <source>
    </source>
</evidence>
<evidence type="ECO:0007744" key="13">
    <source>
    </source>
</evidence>
<evidence type="ECO:0007744" key="14">
    <source>
    </source>
</evidence>
<evidence type="ECO:0007744" key="15">
    <source>
    </source>
</evidence>
<evidence type="ECO:0007829" key="16">
    <source>
        <dbReference type="PDB" id="2AI6"/>
    </source>
</evidence>
<evidence type="ECO:0007829" key="17">
    <source>
        <dbReference type="PDB" id="2HW4"/>
    </source>
</evidence>
<name>PHP14_HUMAN</name>
<accession>Q9NRX4</accession>
<accession>B1AMX0</accession>
<accession>B1AMX1</accession>
<accession>Q9H0Y3</accession>
<organism>
    <name type="scientific">Homo sapiens</name>
    <name type="common">Human</name>
    <dbReference type="NCBI Taxonomy" id="9606"/>
    <lineage>
        <taxon>Eukaryota</taxon>
        <taxon>Metazoa</taxon>
        <taxon>Chordata</taxon>
        <taxon>Craniata</taxon>
        <taxon>Vertebrata</taxon>
        <taxon>Euteleostomi</taxon>
        <taxon>Mammalia</taxon>
        <taxon>Eutheria</taxon>
        <taxon>Euarchontoglires</taxon>
        <taxon>Primates</taxon>
        <taxon>Haplorrhini</taxon>
        <taxon>Catarrhini</taxon>
        <taxon>Hominidae</taxon>
        <taxon>Homo</taxon>
    </lineage>
</organism>
<protein>
    <recommendedName>
        <fullName evidence="7">14 kDa phosphohistidine phosphatase</fullName>
        <ecNumber evidence="5 6">3.9.1.3</ecNumber>
    </recommendedName>
    <alternativeName>
        <fullName evidence="10">Phosphohistidine phosphatase 1</fullName>
        <shortName evidence="10">PHPT1</shortName>
    </alternativeName>
    <alternativeName>
        <fullName evidence="9">Protein histidine phosphatase</fullName>
        <shortName evidence="9">PHP</shortName>
    </alternativeName>
    <alternativeName>
        <fullName>Protein janus-A homolog</fullName>
    </alternativeName>
</protein>
<feature type="initiator methionine" description="Removed" evidence="2 13 14 15">
    <location>
        <position position="1"/>
    </location>
</feature>
<feature type="chain" id="PRO_0000206152" description="14 kDa phosphohistidine phosphatase">
    <location>
        <begin position="2"/>
        <end position="125"/>
    </location>
</feature>
<feature type="active site" description="Proton acceptor" evidence="4">
    <location>
        <position position="53"/>
    </location>
</feature>
<feature type="binding site" evidence="12">
    <location>
        <position position="21"/>
    </location>
    <ligand>
        <name>substrate</name>
    </ligand>
</feature>
<feature type="binding site" evidence="12">
    <location>
        <begin position="94"/>
        <end position="96"/>
    </location>
    <ligand>
        <name>substrate</name>
    </ligand>
</feature>
<feature type="modified residue" description="N-acetylalanine" evidence="13 14 15">
    <location>
        <position position="2"/>
    </location>
</feature>
<feature type="splice variant" id="VSP_041159" description="In isoform 2." evidence="8">
    <original>AYGPAQHAISTEKIKAKYPDYEVTWANDGY</original>
    <variation>MRPTCVPLGASGPRIHHQGLWSCPARHFN</variation>
    <location>
        <begin position="96"/>
        <end position="125"/>
    </location>
</feature>
<feature type="mutagenesis site" description="Decreased affinity for substrate and strongly reduced catalytic activity." evidence="4">
    <original>K</original>
    <variation>A</variation>
    <location>
        <position position="21"/>
    </location>
</feature>
<feature type="mutagenesis site" description="Slightly decreased affinity for substrate, but no effect on catalytic activity." evidence="3 4">
    <original>R</original>
    <variation>A</variation>
    <location>
        <position position="45"/>
    </location>
</feature>
<feature type="mutagenesis site" description="Loss of activity." evidence="3 4">
    <original>H</original>
    <variation>A</variation>
    <location>
        <position position="53"/>
    </location>
</feature>
<feature type="mutagenesis site" description="Decreased affinity for substrate and reduced catalytic activity." evidence="3 4">
    <original>R</original>
    <variation>A</variation>
    <location>
        <position position="78"/>
    </location>
</feature>
<feature type="mutagenesis site" description="Decreased affinity for substrate and strongly reduced catalytic activity.">
    <original>S</original>
    <variation>A</variation>
    <location>
        <position position="94"/>
    </location>
</feature>
<feature type="mutagenesis site" description="Decreased affinity for substrate and slightly reduced catalytic activity." evidence="3 4">
    <original>H</original>
    <variation>A</variation>
    <location>
        <position position="102"/>
    </location>
</feature>
<feature type="sequence conflict" description="In Ref. 4; CAB66579." evidence="11" ref="4">
    <original>I</original>
    <variation>T</variation>
    <location>
        <position position="14"/>
    </location>
</feature>
<feature type="sequence conflict" description="In Ref. 4; CAB66579." evidence="11" ref="4">
    <original>V</original>
    <variation>I</variation>
    <location>
        <position position="27"/>
    </location>
</feature>
<feature type="sequence conflict" description="In Ref. 4; CAB66579." evidence="11" ref="4">
    <original>I</original>
    <variation>T</variation>
    <location>
        <position position="79"/>
    </location>
</feature>
<feature type="helix" evidence="17">
    <location>
        <begin position="6"/>
        <end position="8"/>
    </location>
</feature>
<feature type="strand" evidence="17">
    <location>
        <begin position="11"/>
        <end position="14"/>
    </location>
</feature>
<feature type="strand" evidence="17">
    <location>
        <begin position="17"/>
        <end position="28"/>
    </location>
</feature>
<feature type="helix" evidence="16">
    <location>
        <begin position="31"/>
        <end position="33"/>
    </location>
</feature>
<feature type="strand" evidence="17">
    <location>
        <begin position="40"/>
        <end position="46"/>
    </location>
</feature>
<feature type="helix" evidence="17">
    <location>
        <begin position="53"/>
        <end position="66"/>
    </location>
</feature>
<feature type="strand" evidence="17">
    <location>
        <begin position="70"/>
        <end position="82"/>
    </location>
</feature>
<feature type="turn" evidence="17">
    <location>
        <begin position="83"/>
        <end position="86"/>
    </location>
</feature>
<feature type="strand" evidence="17">
    <location>
        <begin position="87"/>
        <end position="91"/>
    </location>
</feature>
<feature type="turn" evidence="17">
    <location>
        <begin position="95"/>
        <end position="97"/>
    </location>
</feature>
<feature type="helix" evidence="17">
    <location>
        <begin position="102"/>
        <end position="112"/>
    </location>
</feature>
<feature type="strand" evidence="17">
    <location>
        <begin position="116"/>
        <end position="120"/>
    </location>
</feature>
<sequence>MAVADLALIPDVDIDSDGVFKYVLIRVHSAPRSGAPAAESKEIVRGYKWAEYHADIYDKVSGDMQKQGCDCECLGGGRISHQSQDKKIHVYGYSMAYGPAQHAISTEKIKAKYPDYEVTWANDGY</sequence>
<comment type="function">
    <text evidence="5 6">Exhibits phosphohistidine phosphatase activity.</text>
</comment>
<comment type="catalytic activity">
    <reaction evidence="5 6">
        <text>N(pros)-phospho-L-histidyl-[protein] + H2O = L-histidyl-[protein] + phosphate</text>
        <dbReference type="Rhea" id="RHEA:47964"/>
        <dbReference type="Rhea" id="RHEA-COMP:9745"/>
        <dbReference type="Rhea" id="RHEA-COMP:9746"/>
        <dbReference type="ChEBI" id="CHEBI:15377"/>
        <dbReference type="ChEBI" id="CHEBI:29979"/>
        <dbReference type="ChEBI" id="CHEBI:43474"/>
        <dbReference type="ChEBI" id="CHEBI:64837"/>
        <dbReference type="EC" id="3.9.1.3"/>
    </reaction>
</comment>
<comment type="catalytic activity">
    <reaction evidence="5 6">
        <text>N(tele)-phospho-L-histidyl-[protein] + H2O = L-histidyl-[protein] + phosphate</text>
        <dbReference type="Rhea" id="RHEA:47960"/>
        <dbReference type="Rhea" id="RHEA-COMP:9745"/>
        <dbReference type="Rhea" id="RHEA-COMP:10719"/>
        <dbReference type="ChEBI" id="CHEBI:15377"/>
        <dbReference type="ChEBI" id="CHEBI:29979"/>
        <dbReference type="ChEBI" id="CHEBI:43474"/>
        <dbReference type="ChEBI" id="CHEBI:83586"/>
        <dbReference type="EC" id="3.9.1.3"/>
    </reaction>
</comment>
<comment type="subunit">
    <text evidence="2">Monomer.</text>
</comment>
<comment type="interaction">
    <interactant intactId="EBI-740955">
        <id>Q9NRX4</id>
    </interactant>
    <interactant intactId="EBI-930964">
        <id>P54253</id>
        <label>ATXN1</label>
    </interactant>
    <organismsDiffer>false</organismsDiffer>
    <experiments>8</experiments>
</comment>
<comment type="interaction">
    <interactant intactId="EBI-740955">
        <id>Q9NRX4</id>
    </interactant>
    <interactant intactId="EBI-2924473">
        <id>O15554</id>
        <label>KCNN4</label>
    </interactant>
    <organismsDiffer>false</organismsDiffer>
    <experiments>2</experiments>
</comment>
<comment type="subcellular location">
    <subcellularLocation>
        <location evidence="1">Cytoplasm</location>
    </subcellularLocation>
</comment>
<comment type="alternative products">
    <event type="alternative splicing"/>
    <isoform>
        <id>Q9NRX4-1</id>
        <name>1</name>
        <sequence type="displayed"/>
    </isoform>
    <isoform>
        <id>Q9NRX4-2</id>
        <name>2</name>
        <sequence type="described" ref="VSP_041159"/>
    </isoform>
</comment>
<comment type="tissue specificity">
    <text evidence="2">Expressed abundantly in heart and skeletal muscle.</text>
</comment>
<comment type="similarity">
    <text evidence="11">Belongs to the janus family.</text>
</comment>
<dbReference type="EC" id="3.9.1.3" evidence="5 6"/>
<dbReference type="EMBL" id="AF393504">
    <property type="protein sequence ID" value="AAN52504.1"/>
    <property type="molecule type" value="mRNA"/>
</dbReference>
<dbReference type="EMBL" id="AF164795">
    <property type="protein sequence ID" value="AAF80759.1"/>
    <property type="molecule type" value="mRNA"/>
</dbReference>
<dbReference type="EMBL" id="AF285119">
    <property type="protein sequence ID" value="AAG01156.1"/>
    <property type="molecule type" value="mRNA"/>
</dbReference>
<dbReference type="EMBL" id="AL136644">
    <property type="protein sequence ID" value="CAB66579.1"/>
    <property type="molecule type" value="mRNA"/>
</dbReference>
<dbReference type="EMBL" id="AL355987">
    <property type="status" value="NOT_ANNOTATED_CDS"/>
    <property type="molecule type" value="Genomic_DNA"/>
</dbReference>
<dbReference type="EMBL" id="CH471090">
    <property type="protein sequence ID" value="EAW88289.1"/>
    <property type="molecule type" value="Genomic_DNA"/>
</dbReference>
<dbReference type="EMBL" id="BC024648">
    <property type="protein sequence ID" value="AAH24648.1"/>
    <property type="molecule type" value="mRNA"/>
</dbReference>
<dbReference type="EMBL" id="BQ922335">
    <property type="status" value="NOT_ANNOTATED_CDS"/>
    <property type="molecule type" value="mRNA"/>
</dbReference>
<dbReference type="CCDS" id="CCDS48060.1">
    <molecule id="Q9NRX4-2"/>
</dbReference>
<dbReference type="CCDS" id="CCDS7009.1">
    <molecule id="Q9NRX4-1"/>
</dbReference>
<dbReference type="RefSeq" id="NP_001129333.1">
    <molecule id="Q9NRX4-2"/>
    <property type="nucleotide sequence ID" value="NM_001135861.3"/>
</dbReference>
<dbReference type="RefSeq" id="NP_054891.2">
    <molecule id="Q9NRX4-1"/>
    <property type="nucleotide sequence ID" value="NM_014172.5"/>
</dbReference>
<dbReference type="PDB" id="2AI6">
    <property type="method" value="NMR"/>
    <property type="chains" value="A=1-125"/>
</dbReference>
<dbReference type="PDB" id="2HW4">
    <property type="method" value="X-ray"/>
    <property type="resolution" value="1.90 A"/>
    <property type="chains" value="A=5-125"/>
</dbReference>
<dbReference type="PDB" id="2NMM">
    <property type="method" value="X-ray"/>
    <property type="resolution" value="2.70 A"/>
    <property type="chains" value="A/B/C=1-125"/>
</dbReference>
<dbReference type="PDB" id="2OZW">
    <property type="method" value="NMR"/>
    <property type="chains" value="A=1-125"/>
</dbReference>
<dbReference type="PDB" id="2OZX">
    <property type="method" value="NMR"/>
    <property type="chains" value="A=1-125"/>
</dbReference>
<dbReference type="PDBsum" id="2AI6"/>
<dbReference type="PDBsum" id="2HW4"/>
<dbReference type="PDBsum" id="2NMM"/>
<dbReference type="PDBsum" id="2OZW"/>
<dbReference type="PDBsum" id="2OZX"/>
<dbReference type="BMRB" id="Q9NRX4"/>
<dbReference type="SMR" id="Q9NRX4"/>
<dbReference type="BioGRID" id="118854">
    <property type="interactions" value="61"/>
</dbReference>
<dbReference type="DIP" id="DIP-48597N"/>
<dbReference type="FunCoup" id="Q9NRX4">
    <property type="interactions" value="1464"/>
</dbReference>
<dbReference type="IntAct" id="Q9NRX4">
    <property type="interactions" value="14"/>
</dbReference>
<dbReference type="MINT" id="Q9NRX4"/>
<dbReference type="STRING" id="9606.ENSP00000247665"/>
<dbReference type="BindingDB" id="Q9NRX4"/>
<dbReference type="ChEMBL" id="CHEMBL5169200"/>
<dbReference type="DEPOD" id="PHPT1"/>
<dbReference type="GlyGen" id="Q9NRX4">
    <property type="glycosylation" value="1 site, 1 O-linked glycan (1 site)"/>
</dbReference>
<dbReference type="iPTMnet" id="Q9NRX4"/>
<dbReference type="MetOSite" id="Q9NRX4"/>
<dbReference type="PhosphoSitePlus" id="Q9NRX4"/>
<dbReference type="BioMuta" id="PHPT1"/>
<dbReference type="DMDM" id="25008934"/>
<dbReference type="jPOST" id="Q9NRX4"/>
<dbReference type="MassIVE" id="Q9NRX4"/>
<dbReference type="PaxDb" id="9606-ENSP00000247665"/>
<dbReference type="PeptideAtlas" id="Q9NRX4"/>
<dbReference type="ProteomicsDB" id="82435">
    <molecule id="Q9NRX4-1"/>
</dbReference>
<dbReference type="ProteomicsDB" id="82436">
    <molecule id="Q9NRX4-2"/>
</dbReference>
<dbReference type="Pumba" id="Q9NRX4"/>
<dbReference type="TopDownProteomics" id="Q9NRX4-1">
    <molecule id="Q9NRX4-1"/>
</dbReference>
<dbReference type="Antibodypedia" id="18807">
    <property type="antibodies" value="386 antibodies from 32 providers"/>
</dbReference>
<dbReference type="DNASU" id="29085"/>
<dbReference type="Ensembl" id="ENST00000247665.12">
    <molecule id="Q9NRX4-1"/>
    <property type="protein sequence ID" value="ENSP00000247665.10"/>
    <property type="gene ID" value="ENSG00000054148.18"/>
</dbReference>
<dbReference type="Ensembl" id="ENST00000371661.5">
    <molecule id="Q9NRX4-2"/>
    <property type="protein sequence ID" value="ENSP00000360724.1"/>
    <property type="gene ID" value="ENSG00000054148.18"/>
</dbReference>
<dbReference type="GeneID" id="29085"/>
<dbReference type="KEGG" id="hsa:29085"/>
<dbReference type="MANE-Select" id="ENST00000247665.12">
    <property type="protein sequence ID" value="ENSP00000247665.10"/>
    <property type="RefSeq nucleotide sequence ID" value="NM_014172.6"/>
    <property type="RefSeq protein sequence ID" value="NP_054891.2"/>
</dbReference>
<dbReference type="UCSC" id="uc064xew.1">
    <molecule id="Q9NRX4-1"/>
    <property type="organism name" value="human"/>
</dbReference>
<dbReference type="AGR" id="HGNC:30033"/>
<dbReference type="CTD" id="29085"/>
<dbReference type="DisGeNET" id="29085"/>
<dbReference type="GeneCards" id="PHPT1"/>
<dbReference type="HGNC" id="HGNC:30033">
    <property type="gene designation" value="PHPT1"/>
</dbReference>
<dbReference type="HPA" id="ENSG00000054148">
    <property type="expression patterns" value="Low tissue specificity"/>
</dbReference>
<dbReference type="MIM" id="610167">
    <property type="type" value="gene"/>
</dbReference>
<dbReference type="neXtProt" id="NX_Q9NRX4"/>
<dbReference type="OpenTargets" id="ENSG00000054148"/>
<dbReference type="PharmGKB" id="PA134948141"/>
<dbReference type="VEuPathDB" id="HostDB:ENSG00000054148"/>
<dbReference type="eggNOG" id="ENOG502S4DR">
    <property type="taxonomic scope" value="Eukaryota"/>
</dbReference>
<dbReference type="GeneTree" id="ENSGT00390000002738"/>
<dbReference type="HOGENOM" id="CLU_120717_0_1_1"/>
<dbReference type="InParanoid" id="Q9NRX4"/>
<dbReference type="OMA" id="VRGYSWA"/>
<dbReference type="OrthoDB" id="10249612at2759"/>
<dbReference type="PAN-GO" id="Q9NRX4">
    <property type="GO annotations" value="3 GO annotations based on evolutionary models"/>
</dbReference>
<dbReference type="PhylomeDB" id="Q9NRX4"/>
<dbReference type="TreeFam" id="TF315158"/>
<dbReference type="BioCyc" id="MetaCyc:ENSG00000054148-MONOMER"/>
<dbReference type="BRENDA" id="3.9.1.3">
    <property type="organism ID" value="2681"/>
</dbReference>
<dbReference type="PathwayCommons" id="Q9NRX4"/>
<dbReference type="SignaLink" id="Q9NRX4"/>
<dbReference type="SIGNOR" id="Q9NRX4"/>
<dbReference type="BioGRID-ORCS" id="29085">
    <property type="hits" value="28 hits in 1176 CRISPR screens"/>
</dbReference>
<dbReference type="ChiTaRS" id="PHPT1">
    <property type="organism name" value="human"/>
</dbReference>
<dbReference type="EvolutionaryTrace" id="Q9NRX4"/>
<dbReference type="GeneWiki" id="PHPT1"/>
<dbReference type="GenomeRNAi" id="29085"/>
<dbReference type="Pharos" id="Q9NRX4">
    <property type="development level" value="Tbio"/>
</dbReference>
<dbReference type="PRO" id="PR:Q9NRX4"/>
<dbReference type="Proteomes" id="UP000005640">
    <property type="component" value="Chromosome 9"/>
</dbReference>
<dbReference type="RNAct" id="Q9NRX4">
    <property type="molecule type" value="protein"/>
</dbReference>
<dbReference type="Bgee" id="ENSG00000054148">
    <property type="expression patterns" value="Expressed in apex of heart and 157 other cell types or tissues"/>
</dbReference>
<dbReference type="ExpressionAtlas" id="Q9NRX4">
    <property type="expression patterns" value="baseline and differential"/>
</dbReference>
<dbReference type="GO" id="GO:0005829">
    <property type="term" value="C:cytosol"/>
    <property type="evidence" value="ECO:0000314"/>
    <property type="project" value="BHF-UCL"/>
</dbReference>
<dbReference type="GO" id="GO:0070062">
    <property type="term" value="C:extracellular exosome"/>
    <property type="evidence" value="ECO:0007005"/>
    <property type="project" value="UniProtKB"/>
</dbReference>
<dbReference type="GO" id="GO:0061851">
    <property type="term" value="C:leading edge of lamellipodium"/>
    <property type="evidence" value="ECO:0000314"/>
    <property type="project" value="ARUK-UCL"/>
</dbReference>
<dbReference type="GO" id="GO:0016604">
    <property type="term" value="C:nuclear body"/>
    <property type="evidence" value="ECO:0000314"/>
    <property type="project" value="HPA"/>
</dbReference>
<dbReference type="GO" id="GO:0005654">
    <property type="term" value="C:nucleoplasm"/>
    <property type="evidence" value="ECO:0000314"/>
    <property type="project" value="HPA"/>
</dbReference>
<dbReference type="GO" id="GO:0005886">
    <property type="term" value="C:plasma membrane"/>
    <property type="evidence" value="ECO:0000314"/>
    <property type="project" value="HPA"/>
</dbReference>
<dbReference type="GO" id="GO:0051015">
    <property type="term" value="F:actin filament binding"/>
    <property type="evidence" value="ECO:0000314"/>
    <property type="project" value="ARUK-UCL"/>
</dbReference>
<dbReference type="GO" id="GO:0019855">
    <property type="term" value="F:calcium channel inhibitor activity"/>
    <property type="evidence" value="ECO:0000314"/>
    <property type="project" value="BHF-UCL"/>
</dbReference>
<dbReference type="GO" id="GO:0004857">
    <property type="term" value="F:enzyme inhibitor activity"/>
    <property type="evidence" value="ECO:0000314"/>
    <property type="project" value="BHF-UCL"/>
</dbReference>
<dbReference type="GO" id="GO:0101006">
    <property type="term" value="F:protein histidine phosphatase activity"/>
    <property type="evidence" value="ECO:0000314"/>
    <property type="project" value="BHF-UCL"/>
</dbReference>
<dbReference type="GO" id="GO:0044325">
    <property type="term" value="F:transmembrane transporter binding"/>
    <property type="evidence" value="ECO:0000353"/>
    <property type="project" value="BHF-UCL"/>
</dbReference>
<dbReference type="GO" id="GO:0030036">
    <property type="term" value="P:actin cytoskeleton organization"/>
    <property type="evidence" value="ECO:0000314"/>
    <property type="project" value="ARUK-UCL"/>
</dbReference>
<dbReference type="GO" id="GO:0097581">
    <property type="term" value="P:lamellipodium organization"/>
    <property type="evidence" value="ECO:0000314"/>
    <property type="project" value="ARUK-UCL"/>
</dbReference>
<dbReference type="GO" id="GO:0050860">
    <property type="term" value="P:negative regulation of T cell receptor signaling pathway"/>
    <property type="evidence" value="ECO:0000315"/>
    <property type="project" value="BHF-UCL"/>
</dbReference>
<dbReference type="GO" id="GO:2000147">
    <property type="term" value="P:positive regulation of cell motility"/>
    <property type="evidence" value="ECO:0000315"/>
    <property type="project" value="BHF-UCL"/>
</dbReference>
<dbReference type="GO" id="GO:0035774">
    <property type="term" value="P:positive regulation of insulin secretion involved in cellular response to glucose stimulus"/>
    <property type="evidence" value="ECO:0000250"/>
    <property type="project" value="BHF-UCL"/>
</dbReference>
<dbReference type="FunFam" id="3.50.20.20:FF:000001">
    <property type="entry name" value="14 kDa phosphohistidine phosphatase"/>
    <property type="match status" value="1"/>
</dbReference>
<dbReference type="Gene3D" id="3.50.20.20">
    <property type="entry name" value="Janus/Ocnus"/>
    <property type="match status" value="1"/>
</dbReference>
<dbReference type="InterPro" id="IPR007702">
    <property type="entry name" value="Janus"/>
</dbReference>
<dbReference type="InterPro" id="IPR038596">
    <property type="entry name" value="Janus_sf"/>
</dbReference>
<dbReference type="PANTHER" id="PTHR12258:SF10">
    <property type="entry name" value="14 KDA PHOSPHOHISTIDINE PHOSPHATASE"/>
    <property type="match status" value="1"/>
</dbReference>
<dbReference type="PANTHER" id="PTHR12258">
    <property type="entry name" value="JANUS-A/JANUS-B"/>
    <property type="match status" value="1"/>
</dbReference>
<dbReference type="Pfam" id="PF05005">
    <property type="entry name" value="Ocnus"/>
    <property type="match status" value="1"/>
</dbReference>
<dbReference type="SUPFAM" id="SSF143724">
    <property type="entry name" value="PHP14-like"/>
    <property type="match status" value="1"/>
</dbReference>